<accession>P43413</accession>
<accession>P77999</accession>
<dbReference type="EC" id="4.98.1.1" evidence="1"/>
<dbReference type="EMBL" id="Z47767">
    <property type="protein sequence ID" value="CAA87697.1"/>
    <property type="molecule type" value="Genomic_DNA"/>
</dbReference>
<dbReference type="EMBL" id="U46859">
    <property type="protein sequence ID" value="AAC60760.1"/>
    <property type="molecule type" value="Genomic_DNA"/>
</dbReference>
<dbReference type="PIR" id="S70735">
    <property type="entry name" value="S70735"/>
</dbReference>
<dbReference type="SMR" id="P43413"/>
<dbReference type="STRING" id="1443113.LC20_01453"/>
<dbReference type="eggNOG" id="COG0276">
    <property type="taxonomic scope" value="Bacteria"/>
</dbReference>
<dbReference type="UniPathway" id="UPA00252">
    <property type="reaction ID" value="UER00325"/>
</dbReference>
<dbReference type="GO" id="GO:0005737">
    <property type="term" value="C:cytoplasm"/>
    <property type="evidence" value="ECO:0007669"/>
    <property type="project" value="UniProtKB-SubCell"/>
</dbReference>
<dbReference type="GO" id="GO:0004325">
    <property type="term" value="F:ferrochelatase activity"/>
    <property type="evidence" value="ECO:0007669"/>
    <property type="project" value="UniProtKB-UniRule"/>
</dbReference>
<dbReference type="GO" id="GO:0046872">
    <property type="term" value="F:metal ion binding"/>
    <property type="evidence" value="ECO:0007669"/>
    <property type="project" value="UniProtKB-KW"/>
</dbReference>
<dbReference type="GO" id="GO:0006783">
    <property type="term" value="P:heme biosynthetic process"/>
    <property type="evidence" value="ECO:0007669"/>
    <property type="project" value="UniProtKB-UniRule"/>
</dbReference>
<dbReference type="CDD" id="cd00419">
    <property type="entry name" value="Ferrochelatase_C"/>
    <property type="match status" value="1"/>
</dbReference>
<dbReference type="CDD" id="cd03411">
    <property type="entry name" value="Ferrochelatase_N"/>
    <property type="match status" value="1"/>
</dbReference>
<dbReference type="FunFam" id="3.40.50.1400:FF:000004">
    <property type="entry name" value="Ferrochelatase"/>
    <property type="match status" value="1"/>
</dbReference>
<dbReference type="Gene3D" id="3.40.50.1400">
    <property type="match status" value="2"/>
</dbReference>
<dbReference type="HAMAP" id="MF_00323">
    <property type="entry name" value="Ferrochelatase"/>
    <property type="match status" value="1"/>
</dbReference>
<dbReference type="InterPro" id="IPR001015">
    <property type="entry name" value="Ferrochelatase"/>
</dbReference>
<dbReference type="InterPro" id="IPR019772">
    <property type="entry name" value="Ferrochelatase_AS"/>
</dbReference>
<dbReference type="InterPro" id="IPR033644">
    <property type="entry name" value="Ferrochelatase_C"/>
</dbReference>
<dbReference type="InterPro" id="IPR033659">
    <property type="entry name" value="Ferrochelatase_N"/>
</dbReference>
<dbReference type="NCBIfam" id="TIGR00109">
    <property type="entry name" value="hemH"/>
    <property type="match status" value="1"/>
</dbReference>
<dbReference type="PANTHER" id="PTHR11108">
    <property type="entry name" value="FERROCHELATASE"/>
    <property type="match status" value="1"/>
</dbReference>
<dbReference type="PANTHER" id="PTHR11108:SF1">
    <property type="entry name" value="FERROCHELATASE, MITOCHONDRIAL"/>
    <property type="match status" value="1"/>
</dbReference>
<dbReference type="Pfam" id="PF00762">
    <property type="entry name" value="Ferrochelatase"/>
    <property type="match status" value="1"/>
</dbReference>
<dbReference type="SUPFAM" id="SSF53800">
    <property type="entry name" value="Chelatase"/>
    <property type="match status" value="1"/>
</dbReference>
<dbReference type="PROSITE" id="PS00534">
    <property type="entry name" value="FERROCHELATASE"/>
    <property type="match status" value="1"/>
</dbReference>
<protein>
    <recommendedName>
        <fullName evidence="1">Ferrochelatase</fullName>
        <ecNumber evidence="1">4.98.1.1</ecNumber>
    </recommendedName>
    <alternativeName>
        <fullName evidence="1">Heme synthase</fullName>
    </alternativeName>
    <alternativeName>
        <fullName evidence="1">Protoheme ferro-lyase</fullName>
    </alternativeName>
</protein>
<comment type="function">
    <text evidence="1">Catalyzes the ferrous insertion into protoporphyrin IX.</text>
</comment>
<comment type="catalytic activity">
    <reaction evidence="1">
        <text>heme b + 2 H(+) = protoporphyrin IX + Fe(2+)</text>
        <dbReference type="Rhea" id="RHEA:22584"/>
        <dbReference type="ChEBI" id="CHEBI:15378"/>
        <dbReference type="ChEBI" id="CHEBI:29033"/>
        <dbReference type="ChEBI" id="CHEBI:57306"/>
        <dbReference type="ChEBI" id="CHEBI:60344"/>
        <dbReference type="EC" id="4.98.1.1"/>
    </reaction>
</comment>
<comment type="pathway">
    <text evidence="1">Porphyrin-containing compound metabolism; protoheme biosynthesis; protoheme from protoporphyrin-IX: step 1/1.</text>
</comment>
<comment type="subcellular location">
    <subcellularLocation>
        <location evidence="1">Cytoplasm</location>
    </subcellularLocation>
</comment>
<comment type="similarity">
    <text evidence="1 2">Belongs to the ferrochelatase family.</text>
</comment>
<name>HEMH_YEREN</name>
<gene>
    <name evidence="1" type="primary">hemH</name>
</gene>
<proteinExistence type="inferred from homology"/>
<reference key="1">
    <citation type="journal article" date="1995" name="Mol. Microbiol.">
        <title>A novel locus of Yersinia enterocolitica serotype O:3 involved in lipopolysaccharide outer core biosynthesis.</title>
        <authorList>
            <person name="Skurnik M."/>
            <person name="Venho R."/>
            <person name="Toivanen P."/>
            <person name="Al-Hendy A."/>
        </authorList>
    </citation>
    <scope>NUCLEOTIDE SEQUENCE [GENOMIC DNA]</scope>
    <source>
        <strain>6471/76 / Serotype O:3</strain>
    </source>
</reference>
<reference key="2">
    <citation type="journal article" date="1996" name="Microbiology">
        <title>The gene cluster directing O-antigen biosynthesis in Yersinia enterocolitica serotype 0:8: identification of the genes for mannose and galactose biosynthesis and the gene for the O-antigen polymerase.</title>
        <authorList>
            <person name="Zhang L."/>
            <person name="Toivanen P."/>
            <person name="Skurnik M."/>
        </authorList>
    </citation>
    <scope>NUCLEOTIDE SEQUENCE [GENOMIC DNA]</scope>
    <source>
        <strain>8081C / Serotype O:8</strain>
    </source>
</reference>
<organism>
    <name type="scientific">Yersinia enterocolitica</name>
    <dbReference type="NCBI Taxonomy" id="630"/>
    <lineage>
        <taxon>Bacteria</taxon>
        <taxon>Pseudomonadati</taxon>
        <taxon>Pseudomonadota</taxon>
        <taxon>Gammaproteobacteria</taxon>
        <taxon>Enterobacterales</taxon>
        <taxon>Yersiniaceae</taxon>
        <taxon>Yersinia</taxon>
    </lineage>
</organism>
<evidence type="ECO:0000255" key="1">
    <source>
        <dbReference type="HAMAP-Rule" id="MF_00323"/>
    </source>
</evidence>
<evidence type="ECO:0000305" key="2"/>
<keyword id="KW-0963">Cytoplasm</keyword>
<keyword id="KW-0350">Heme biosynthesis</keyword>
<keyword id="KW-0408">Iron</keyword>
<keyword id="KW-0456">Lyase</keyword>
<keyword id="KW-0479">Metal-binding</keyword>
<keyword id="KW-0627">Porphyrin biosynthesis</keyword>
<feature type="chain" id="PRO_0000175233" description="Ferrochelatase">
    <location>
        <begin position="1"/>
        <end position="322"/>
    </location>
</feature>
<feature type="binding site" evidence="1">
    <location>
        <position position="194"/>
    </location>
    <ligand>
        <name>Fe cation</name>
        <dbReference type="ChEBI" id="CHEBI:24875"/>
    </ligand>
</feature>
<feature type="binding site" evidence="1">
    <location>
        <position position="275"/>
    </location>
    <ligand>
        <name>Fe cation</name>
        <dbReference type="ChEBI" id="CHEBI:24875"/>
    </ligand>
</feature>
<feature type="sequence conflict" description="In Ref. 2; AAC60760." evidence="2" ref="2">
    <original>GTPDA</original>
    <variation>EHRMP</variation>
    <location>
        <begin position="14"/>
        <end position="18"/>
    </location>
</feature>
<feature type="sequence conflict" description="In Ref. 2; AAC60760." evidence="2" ref="2">
    <original>D</original>
    <variation>V</variation>
    <location>
        <position position="34"/>
    </location>
</feature>
<feature type="sequence conflict" description="In Ref. 2; AAC60760." evidence="2" ref="2">
    <original>C</original>
    <variation>W</variation>
    <location>
        <position position="133"/>
    </location>
</feature>
<feature type="sequence conflict" description="In Ref. 2; AAC60760." evidence="2" ref="2">
    <original>KG</original>
    <variation>AS</variation>
    <location>
        <begin position="148"/>
        <end position="149"/>
    </location>
</feature>
<feature type="sequence conflict" description="In Ref. 2; AAC60760." evidence="2" ref="2">
    <original>R</original>
    <variation>P</variation>
    <location>
        <position position="199"/>
    </location>
</feature>
<feature type="sequence conflict" description="In Ref. 2; AAC60760." evidence="2" ref="2">
    <original>QIMMTY</original>
    <variation>TKSRVHI</variation>
    <location>
        <begin position="228"/>
        <end position="233"/>
    </location>
</feature>
<feature type="sequence conflict" description="In Ref. 2; AAC60760." evidence="2" ref="2">
    <original>VFI</original>
    <variation>IFL</variation>
    <location>
        <begin position="287"/>
        <end position="289"/>
    </location>
</feature>
<feature type="sequence conflict" description="In Ref. 1; CAA87697." evidence="2" ref="1">
    <original>KGHIDLLEQLVRDHLSC</original>
    <variation>EGP</variation>
    <location>
        <begin position="306"/>
        <end position="322"/>
    </location>
</feature>
<sequence>MKQSKLGVLMVNLGTPDAPTPQAVKRYLAEFLSDRRVVDTSPWLWWPLLRGVILPIRSPRVAKLYQSVWMDEGSPLLVYSRRQQKALAERMPEIPVELGMSYGSPNLPDAIDKLLAQGVTKLVVLPLYPQYSCSTSAAVWDAVARILKGYRRLPSISFIRDYAEHPAYISALKQSVENSFVQHGKPDRLVLSFHGIPKRYAQLGDDYPQRCEDTSRALRAEIALPAEQIMMTYQSRFGREPWLTPYTDETLKSLPSQGVKHIQLICPGFSADCLETLEEIKEQNREVFIHAGGEKFEYIPALNDDKGHIDLLEQLVRDHLSC</sequence>